<comment type="function">
    <text evidence="1">Involved in the anomeric conversion of L-rhamnose.</text>
</comment>
<comment type="catalytic activity">
    <reaction evidence="1">
        <text>alpha-L-rhamnose = beta-L-rhamnose</text>
        <dbReference type="Rhea" id="RHEA:25584"/>
        <dbReference type="ChEBI" id="CHEBI:27586"/>
        <dbReference type="ChEBI" id="CHEBI:27907"/>
        <dbReference type="EC" id="5.1.3.32"/>
    </reaction>
</comment>
<comment type="pathway">
    <text evidence="1">Carbohydrate metabolism; L-rhamnose metabolism.</text>
</comment>
<comment type="subunit">
    <text evidence="1">Homodimer.</text>
</comment>
<comment type="subcellular location">
    <subcellularLocation>
        <location evidence="1">Cytoplasm</location>
    </subcellularLocation>
</comment>
<comment type="similarity">
    <text evidence="1">Belongs to the rhamnose mutarotase family.</text>
</comment>
<accession>B7MI33</accession>
<protein>
    <recommendedName>
        <fullName evidence="1">L-rhamnose mutarotase</fullName>
        <ecNumber evidence="1">5.1.3.32</ecNumber>
    </recommendedName>
    <alternativeName>
        <fullName evidence="1">Rhamnose 1-epimerase</fullName>
    </alternativeName>
    <alternativeName>
        <fullName evidence="1">Type-3 mutarotase</fullName>
    </alternativeName>
</protein>
<dbReference type="EC" id="5.1.3.32" evidence="1"/>
<dbReference type="EMBL" id="CU928161">
    <property type="protein sequence ID" value="CAR05531.1"/>
    <property type="molecule type" value="Genomic_DNA"/>
</dbReference>
<dbReference type="RefSeq" id="WP_000619492.1">
    <property type="nucleotide sequence ID" value="NC_011742.1"/>
</dbReference>
<dbReference type="SMR" id="B7MI33"/>
<dbReference type="KEGG" id="ecz:ECS88_4348"/>
<dbReference type="HOGENOM" id="CLU_100689_2_0_6"/>
<dbReference type="UniPathway" id="UPA00125"/>
<dbReference type="Proteomes" id="UP000000747">
    <property type="component" value="Chromosome"/>
</dbReference>
<dbReference type="GO" id="GO:0005737">
    <property type="term" value="C:cytoplasm"/>
    <property type="evidence" value="ECO:0007669"/>
    <property type="project" value="UniProtKB-SubCell"/>
</dbReference>
<dbReference type="GO" id="GO:0062192">
    <property type="term" value="F:L-rhamnose mutarotase activity"/>
    <property type="evidence" value="ECO:0007669"/>
    <property type="project" value="UniProtKB-EC"/>
</dbReference>
<dbReference type="GO" id="GO:0019301">
    <property type="term" value="P:rhamnose catabolic process"/>
    <property type="evidence" value="ECO:0007669"/>
    <property type="project" value="TreeGrafter"/>
</dbReference>
<dbReference type="FunFam" id="3.30.70.100:FF:000013">
    <property type="entry name" value="L-rhamnose mutarotase"/>
    <property type="match status" value="1"/>
</dbReference>
<dbReference type="Gene3D" id="3.30.70.100">
    <property type="match status" value="1"/>
</dbReference>
<dbReference type="HAMAP" id="MF_01663">
    <property type="entry name" value="L_rham_rotase"/>
    <property type="match status" value="1"/>
</dbReference>
<dbReference type="InterPro" id="IPR011008">
    <property type="entry name" value="Dimeric_a/b-barrel"/>
</dbReference>
<dbReference type="InterPro" id="IPR013448">
    <property type="entry name" value="L-rhamnose_mutarotase"/>
</dbReference>
<dbReference type="InterPro" id="IPR008000">
    <property type="entry name" value="Rham/fucose_mutarotase"/>
</dbReference>
<dbReference type="NCBIfam" id="TIGR02625">
    <property type="entry name" value="YiiL_rotase"/>
    <property type="match status" value="1"/>
</dbReference>
<dbReference type="PANTHER" id="PTHR34389">
    <property type="entry name" value="L-RHAMNOSE MUTAROTASE"/>
    <property type="match status" value="1"/>
</dbReference>
<dbReference type="PANTHER" id="PTHR34389:SF2">
    <property type="entry name" value="L-RHAMNOSE MUTAROTASE"/>
    <property type="match status" value="1"/>
</dbReference>
<dbReference type="Pfam" id="PF05336">
    <property type="entry name" value="rhaM"/>
    <property type="match status" value="1"/>
</dbReference>
<dbReference type="SUPFAM" id="SSF54909">
    <property type="entry name" value="Dimeric alpha+beta barrel"/>
    <property type="match status" value="1"/>
</dbReference>
<gene>
    <name evidence="1" type="primary">rhaM</name>
    <name type="ordered locus">ECS88_4348</name>
</gene>
<keyword id="KW-0119">Carbohydrate metabolism</keyword>
<keyword id="KW-0963">Cytoplasm</keyword>
<keyword id="KW-0413">Isomerase</keyword>
<keyword id="KW-1185">Reference proteome</keyword>
<keyword id="KW-0684">Rhamnose metabolism</keyword>
<evidence type="ECO:0000255" key="1">
    <source>
        <dbReference type="HAMAP-Rule" id="MF_01663"/>
    </source>
</evidence>
<proteinExistence type="inferred from homology"/>
<organism>
    <name type="scientific">Escherichia coli O45:K1 (strain S88 / ExPEC)</name>
    <dbReference type="NCBI Taxonomy" id="585035"/>
    <lineage>
        <taxon>Bacteria</taxon>
        <taxon>Pseudomonadati</taxon>
        <taxon>Pseudomonadota</taxon>
        <taxon>Gammaproteobacteria</taxon>
        <taxon>Enterobacterales</taxon>
        <taxon>Enterobacteriaceae</taxon>
        <taxon>Escherichia</taxon>
    </lineage>
</organism>
<name>RHAM_ECO45</name>
<feature type="chain" id="PRO_1000187214" description="L-rhamnose mutarotase">
    <location>
        <begin position="1"/>
        <end position="104"/>
    </location>
</feature>
<feature type="active site" description="Proton donor" evidence="1">
    <location>
        <position position="22"/>
    </location>
</feature>
<feature type="binding site" evidence="1">
    <location>
        <position position="18"/>
    </location>
    <ligand>
        <name>substrate</name>
    </ligand>
</feature>
<feature type="binding site" evidence="1">
    <location>
        <position position="41"/>
    </location>
    <ligand>
        <name>substrate</name>
    </ligand>
</feature>
<feature type="binding site" evidence="1">
    <location>
        <begin position="76"/>
        <end position="77"/>
    </location>
    <ligand>
        <name>substrate</name>
    </ligand>
</feature>
<sequence>MIRKAFVMQVNPDAHEEYQRRHNPIWPELEAVLKSHGAHNYAIYLDKAHNLLFATVEIESEERWNAVASTDVCQRWWKYMTDVMPANADNSPVSSELQEVFYLP</sequence>
<reference key="1">
    <citation type="journal article" date="2009" name="PLoS Genet.">
        <title>Organised genome dynamics in the Escherichia coli species results in highly diverse adaptive paths.</title>
        <authorList>
            <person name="Touchon M."/>
            <person name="Hoede C."/>
            <person name="Tenaillon O."/>
            <person name="Barbe V."/>
            <person name="Baeriswyl S."/>
            <person name="Bidet P."/>
            <person name="Bingen E."/>
            <person name="Bonacorsi S."/>
            <person name="Bouchier C."/>
            <person name="Bouvet O."/>
            <person name="Calteau A."/>
            <person name="Chiapello H."/>
            <person name="Clermont O."/>
            <person name="Cruveiller S."/>
            <person name="Danchin A."/>
            <person name="Diard M."/>
            <person name="Dossat C."/>
            <person name="Karoui M.E."/>
            <person name="Frapy E."/>
            <person name="Garry L."/>
            <person name="Ghigo J.M."/>
            <person name="Gilles A.M."/>
            <person name="Johnson J."/>
            <person name="Le Bouguenec C."/>
            <person name="Lescat M."/>
            <person name="Mangenot S."/>
            <person name="Martinez-Jehanne V."/>
            <person name="Matic I."/>
            <person name="Nassif X."/>
            <person name="Oztas S."/>
            <person name="Petit M.A."/>
            <person name="Pichon C."/>
            <person name="Rouy Z."/>
            <person name="Ruf C.S."/>
            <person name="Schneider D."/>
            <person name="Tourret J."/>
            <person name="Vacherie B."/>
            <person name="Vallenet D."/>
            <person name="Medigue C."/>
            <person name="Rocha E.P.C."/>
            <person name="Denamur E."/>
        </authorList>
    </citation>
    <scope>NUCLEOTIDE SEQUENCE [LARGE SCALE GENOMIC DNA]</scope>
    <source>
        <strain>S88 / ExPEC</strain>
    </source>
</reference>